<evidence type="ECO:0000255" key="1">
    <source>
        <dbReference type="HAMAP-Rule" id="MF_03112"/>
    </source>
</evidence>
<keyword id="KW-0067">ATP-binding</keyword>
<keyword id="KW-0963">Cytoplasm</keyword>
<keyword id="KW-0256">Endoplasmic reticulum</keyword>
<keyword id="KW-0333">Golgi apparatus</keyword>
<keyword id="KW-0378">Hydrolase</keyword>
<keyword id="KW-0479">Metal-binding</keyword>
<keyword id="KW-0547">Nucleotide-binding</keyword>
<keyword id="KW-1185">Reference proteome</keyword>
<keyword id="KW-0813">Transport</keyword>
<keyword id="KW-0862">Zinc</keyword>
<sequence length="349" mass="39579">MDFELEPTLEELIKQDTLKWIFVGGKGGVGKTTTSSSIAVQLALQHPEDEFLLISTDPAHNLSDAFCQKFGKDARKVEGLSNLSCMEIDPEAAMSDLQQQAQQYNNDPNDPLKSMMNDMTGSIPGIDEALSFMEVLKHIKNQKVTESDTKDKVSYRTIIFDTAPTGHTLRFLQLPTTLQKLLGKFQQLSGKLGPMMSMLGGGAQGQQDMFAKLNEVQKNVEEVNEQFTNPDLTTFVCVCISEFLSLYETERMIQELMSYKMDVNSIVVNQLLFADDDENPCKRCVARWKMQKKYLDQMAELYEDYHLVKMPLLGSEIRGVDNLKRFSQFLIKPYDPKVDRAIITDLKEQ</sequence>
<proteinExistence type="inferred from homology"/>
<dbReference type="EC" id="3.6.-.-" evidence="1"/>
<dbReference type="EMBL" id="GG692400">
    <property type="protein sequence ID" value="EER31893.1"/>
    <property type="molecule type" value="Genomic_DNA"/>
</dbReference>
<dbReference type="RefSeq" id="XP_002550378.1">
    <property type="nucleotide sequence ID" value="XM_002550332.1"/>
</dbReference>
<dbReference type="SMR" id="C5MF33"/>
<dbReference type="STRING" id="294747.C5MF33"/>
<dbReference type="EnsemblFungi" id="CTRG_04676-t43_1">
    <property type="protein sequence ID" value="CTRG_04676-t43_1-p1"/>
    <property type="gene ID" value="CTRG_04676"/>
</dbReference>
<dbReference type="GeneID" id="8296623"/>
<dbReference type="KEGG" id="ctp:CTRG_04676"/>
<dbReference type="VEuPathDB" id="FungiDB:CTRG_04676"/>
<dbReference type="eggNOG" id="KOG2825">
    <property type="taxonomic scope" value="Eukaryota"/>
</dbReference>
<dbReference type="HOGENOM" id="CLU_040761_0_0_1"/>
<dbReference type="OrthoDB" id="1770at2759"/>
<dbReference type="Proteomes" id="UP000002037">
    <property type="component" value="Unassembled WGS sequence"/>
</dbReference>
<dbReference type="GO" id="GO:0043529">
    <property type="term" value="C:GET complex"/>
    <property type="evidence" value="ECO:0007669"/>
    <property type="project" value="TreeGrafter"/>
</dbReference>
<dbReference type="GO" id="GO:0005794">
    <property type="term" value="C:Golgi apparatus"/>
    <property type="evidence" value="ECO:0007669"/>
    <property type="project" value="UniProtKB-SubCell"/>
</dbReference>
<dbReference type="GO" id="GO:0005524">
    <property type="term" value="F:ATP binding"/>
    <property type="evidence" value="ECO:0007669"/>
    <property type="project" value="UniProtKB-UniRule"/>
</dbReference>
<dbReference type="GO" id="GO:0016887">
    <property type="term" value="F:ATP hydrolysis activity"/>
    <property type="evidence" value="ECO:0007669"/>
    <property type="project" value="InterPro"/>
</dbReference>
<dbReference type="GO" id="GO:0046872">
    <property type="term" value="F:metal ion binding"/>
    <property type="evidence" value="ECO:0007669"/>
    <property type="project" value="UniProtKB-KW"/>
</dbReference>
<dbReference type="GO" id="GO:0071816">
    <property type="term" value="P:tail-anchored membrane protein insertion into ER membrane"/>
    <property type="evidence" value="ECO:0007669"/>
    <property type="project" value="TreeGrafter"/>
</dbReference>
<dbReference type="CDD" id="cd02035">
    <property type="entry name" value="ArsA"/>
    <property type="match status" value="1"/>
</dbReference>
<dbReference type="FunFam" id="3.40.50.300:FF:001359">
    <property type="entry name" value="ATPase GET3"/>
    <property type="match status" value="1"/>
</dbReference>
<dbReference type="Gene3D" id="3.40.50.300">
    <property type="entry name" value="P-loop containing nucleotide triphosphate hydrolases"/>
    <property type="match status" value="1"/>
</dbReference>
<dbReference type="HAMAP" id="MF_03112">
    <property type="entry name" value="Asna1_Get3"/>
    <property type="match status" value="1"/>
</dbReference>
<dbReference type="InterPro" id="IPR025723">
    <property type="entry name" value="Anion-transp_ATPase-like_dom"/>
</dbReference>
<dbReference type="InterPro" id="IPR016300">
    <property type="entry name" value="ATPase_ArsA/GET3"/>
</dbReference>
<dbReference type="InterPro" id="IPR027542">
    <property type="entry name" value="ATPase_ArsA/GET3_euk"/>
</dbReference>
<dbReference type="InterPro" id="IPR027417">
    <property type="entry name" value="P-loop_NTPase"/>
</dbReference>
<dbReference type="NCBIfam" id="TIGR00345">
    <property type="entry name" value="GET3_arsA_TRC40"/>
    <property type="match status" value="1"/>
</dbReference>
<dbReference type="PANTHER" id="PTHR10803">
    <property type="entry name" value="ARSENICAL PUMP-DRIVING ATPASE ARSENITE-TRANSLOCATING ATPASE"/>
    <property type="match status" value="1"/>
</dbReference>
<dbReference type="PANTHER" id="PTHR10803:SF3">
    <property type="entry name" value="ATPASE GET3"/>
    <property type="match status" value="1"/>
</dbReference>
<dbReference type="Pfam" id="PF02374">
    <property type="entry name" value="ArsA_ATPase"/>
    <property type="match status" value="1"/>
</dbReference>
<dbReference type="SUPFAM" id="SSF52540">
    <property type="entry name" value="P-loop containing nucleoside triphosphate hydrolases"/>
    <property type="match status" value="1"/>
</dbReference>
<organism>
    <name type="scientific">Candida tropicalis (strain ATCC MYA-3404 / T1)</name>
    <name type="common">Yeast</name>
    <dbReference type="NCBI Taxonomy" id="294747"/>
    <lineage>
        <taxon>Eukaryota</taxon>
        <taxon>Fungi</taxon>
        <taxon>Dikarya</taxon>
        <taxon>Ascomycota</taxon>
        <taxon>Saccharomycotina</taxon>
        <taxon>Pichiomycetes</taxon>
        <taxon>Debaryomycetaceae</taxon>
        <taxon>Candida/Lodderomyces clade</taxon>
        <taxon>Candida</taxon>
    </lineage>
</organism>
<feature type="chain" id="PRO_0000388199" description="ATPase GET3">
    <location>
        <begin position="1"/>
        <end position="349"/>
    </location>
</feature>
<feature type="active site" evidence="1">
    <location>
        <position position="57"/>
    </location>
</feature>
<feature type="binding site" evidence="1">
    <location>
        <begin position="26"/>
        <end position="33"/>
    </location>
    <ligand>
        <name>ATP</name>
        <dbReference type="ChEBI" id="CHEBI:30616"/>
    </ligand>
</feature>
<feature type="binding site" evidence="1">
    <location>
        <position position="242"/>
    </location>
    <ligand>
        <name>ATP</name>
        <dbReference type="ChEBI" id="CHEBI:30616"/>
    </ligand>
</feature>
<feature type="binding site" evidence="1">
    <location>
        <position position="269"/>
    </location>
    <ligand>
        <name>ATP</name>
        <dbReference type="ChEBI" id="CHEBI:30616"/>
    </ligand>
</feature>
<feature type="binding site" evidence="1">
    <location>
        <position position="281"/>
    </location>
    <ligand>
        <name>Zn(2+)</name>
        <dbReference type="ChEBI" id="CHEBI:29105"/>
        <note>ligand shared between dimeric partners</note>
    </ligand>
</feature>
<feature type="binding site" evidence="1">
    <location>
        <position position="284"/>
    </location>
    <ligand>
        <name>Zn(2+)</name>
        <dbReference type="ChEBI" id="CHEBI:29105"/>
        <note>ligand shared between dimeric partners</note>
    </ligand>
</feature>
<name>GET3_CANTT</name>
<accession>C5MF33</accession>
<protein>
    <recommendedName>
        <fullName evidence="1">ATPase GET3</fullName>
        <ecNumber evidence="1">3.6.-.-</ecNumber>
    </recommendedName>
    <alternativeName>
        <fullName evidence="1">Arsenical pump-driving ATPase</fullName>
    </alternativeName>
    <alternativeName>
        <fullName evidence="1">Arsenite-stimulated ATPase</fullName>
    </alternativeName>
    <alternativeName>
        <fullName evidence="1">Golgi to ER traffic protein 3</fullName>
    </alternativeName>
    <alternativeName>
        <fullName evidence="1">Guided entry of tail-anchored proteins 3</fullName>
    </alternativeName>
</protein>
<reference key="1">
    <citation type="journal article" date="2009" name="Nature">
        <title>Evolution of pathogenicity and sexual reproduction in eight Candida genomes.</title>
        <authorList>
            <person name="Butler G."/>
            <person name="Rasmussen M.D."/>
            <person name="Lin M.F."/>
            <person name="Santos M.A.S."/>
            <person name="Sakthikumar S."/>
            <person name="Munro C.A."/>
            <person name="Rheinbay E."/>
            <person name="Grabherr M."/>
            <person name="Forche A."/>
            <person name="Reedy J.L."/>
            <person name="Agrafioti I."/>
            <person name="Arnaud M.B."/>
            <person name="Bates S."/>
            <person name="Brown A.J.P."/>
            <person name="Brunke S."/>
            <person name="Costanzo M.C."/>
            <person name="Fitzpatrick D.A."/>
            <person name="de Groot P.W.J."/>
            <person name="Harris D."/>
            <person name="Hoyer L.L."/>
            <person name="Hube B."/>
            <person name="Klis F.M."/>
            <person name="Kodira C."/>
            <person name="Lennard N."/>
            <person name="Logue M.E."/>
            <person name="Martin R."/>
            <person name="Neiman A.M."/>
            <person name="Nikolaou E."/>
            <person name="Quail M.A."/>
            <person name="Quinn J."/>
            <person name="Santos M.C."/>
            <person name="Schmitzberger F.F."/>
            <person name="Sherlock G."/>
            <person name="Shah P."/>
            <person name="Silverstein K.A.T."/>
            <person name="Skrzypek M.S."/>
            <person name="Soll D."/>
            <person name="Staggs R."/>
            <person name="Stansfield I."/>
            <person name="Stumpf M.P.H."/>
            <person name="Sudbery P.E."/>
            <person name="Srikantha T."/>
            <person name="Zeng Q."/>
            <person name="Berman J."/>
            <person name="Berriman M."/>
            <person name="Heitman J."/>
            <person name="Gow N.A.R."/>
            <person name="Lorenz M.C."/>
            <person name="Birren B.W."/>
            <person name="Kellis M."/>
            <person name="Cuomo C.A."/>
        </authorList>
    </citation>
    <scope>NUCLEOTIDE SEQUENCE [LARGE SCALE GENOMIC DNA]</scope>
    <source>
        <strain>ATCC MYA-3404 / T1</strain>
    </source>
</reference>
<comment type="function">
    <text evidence="1">ATPase required for the post-translational delivery of tail-anchored (TA) proteins to the endoplasmic reticulum. Recognizes and selectively binds the transmembrane domain of TA proteins in the cytosol. This complex then targets to the endoplasmic reticulum by membrane-bound receptors GET1 and GET2, where the tail-anchored protein is released for insertion. This process is regulated by ATP binding and hydrolysis. ATP binding drives the homodimer towards the closed dimer state, facilitating recognition of newly synthesized TA membrane proteins. ATP hydrolysis is required for insertion. Subsequently, the homodimer reverts towards the open dimer state, lowering its affinity for the GET1-GET2 receptor, and returning it to the cytosol to initiate a new round of targeting. Cooperates with the HDEL receptor ERD2 to mediate the ATP-dependent retrieval of resident ER proteins that contain a C-terminal H-D-E-L retention signal from the Golgi to the ER. Involved in low-level resistance to the oxyanions arsenite and arsenate, and in heat tolerance.</text>
</comment>
<comment type="subunit">
    <text evidence="1">Homodimer. Component of the Golgi to ER traffic (GET) complex, which is composed of GET1, GET2 and GET3. Within the complex, GET1 and GET2 form a heterotetramer which is stabilized by phosphatidylinositol binding and which binds to the GET3 homodimer. Interacts with the chloride channel protein GEF1.</text>
</comment>
<comment type="subcellular location">
    <subcellularLocation>
        <location evidence="1">Cytoplasm</location>
    </subcellularLocation>
    <subcellularLocation>
        <location evidence="1">Endoplasmic reticulum</location>
    </subcellularLocation>
    <subcellularLocation>
        <location evidence="1">Golgi apparatus</location>
    </subcellularLocation>
    <text evidence="1">GET1 and GET2 are required for targeting GET3 to the endoplasmic reticulum.</text>
</comment>
<comment type="similarity">
    <text evidence="1">Belongs to the arsA ATPase family.</text>
</comment>
<gene>
    <name evidence="1" type="primary">GET3</name>
    <name type="ORF">CTRG_04676</name>
</gene>